<name>RL29_RICB8</name>
<sequence>MNDLKSLKSELTSKTVEELFKHLNLLKKELFNLRFQQTLGELKNTSRFSLVKKSIARIKTELTKRSSSGE</sequence>
<accession>A8GVC2</accession>
<reference key="1">
    <citation type="submission" date="2007-09" db="EMBL/GenBank/DDBJ databases">
        <title>Complete genome sequencing of Rickettsia bellii.</title>
        <authorList>
            <person name="Madan A."/>
            <person name="Lee H."/>
            <person name="Madan A."/>
            <person name="Yoon J.-G."/>
            <person name="Ryu G.-Y."/>
            <person name="Dasch G."/>
            <person name="Ereemeva M."/>
        </authorList>
    </citation>
    <scope>NUCLEOTIDE SEQUENCE [LARGE SCALE GENOMIC DNA]</scope>
    <source>
        <strain>OSU 85-389</strain>
    </source>
</reference>
<feature type="chain" id="PRO_1000007588" description="Large ribosomal subunit protein uL29">
    <location>
        <begin position="1"/>
        <end position="70"/>
    </location>
</feature>
<dbReference type="EMBL" id="CP000849">
    <property type="protein sequence ID" value="ABV78799.1"/>
    <property type="molecule type" value="Genomic_DNA"/>
</dbReference>
<dbReference type="RefSeq" id="WP_011477713.1">
    <property type="nucleotide sequence ID" value="NC_009883.1"/>
</dbReference>
<dbReference type="SMR" id="A8GVC2"/>
<dbReference type="KEGG" id="rbo:A1I_02075"/>
<dbReference type="HOGENOM" id="CLU_158491_1_0_5"/>
<dbReference type="GO" id="GO:0022625">
    <property type="term" value="C:cytosolic large ribosomal subunit"/>
    <property type="evidence" value="ECO:0007669"/>
    <property type="project" value="TreeGrafter"/>
</dbReference>
<dbReference type="GO" id="GO:0003735">
    <property type="term" value="F:structural constituent of ribosome"/>
    <property type="evidence" value="ECO:0007669"/>
    <property type="project" value="InterPro"/>
</dbReference>
<dbReference type="GO" id="GO:0006412">
    <property type="term" value="P:translation"/>
    <property type="evidence" value="ECO:0007669"/>
    <property type="project" value="UniProtKB-UniRule"/>
</dbReference>
<dbReference type="CDD" id="cd00427">
    <property type="entry name" value="Ribosomal_L29_HIP"/>
    <property type="match status" value="1"/>
</dbReference>
<dbReference type="FunFam" id="1.10.287.310:FF:000001">
    <property type="entry name" value="50S ribosomal protein L29"/>
    <property type="match status" value="1"/>
</dbReference>
<dbReference type="Gene3D" id="1.10.287.310">
    <property type="match status" value="1"/>
</dbReference>
<dbReference type="HAMAP" id="MF_00374">
    <property type="entry name" value="Ribosomal_uL29"/>
    <property type="match status" value="1"/>
</dbReference>
<dbReference type="InterPro" id="IPR050063">
    <property type="entry name" value="Ribosomal_protein_uL29"/>
</dbReference>
<dbReference type="InterPro" id="IPR001854">
    <property type="entry name" value="Ribosomal_uL29"/>
</dbReference>
<dbReference type="InterPro" id="IPR018254">
    <property type="entry name" value="Ribosomal_uL29_CS"/>
</dbReference>
<dbReference type="InterPro" id="IPR036049">
    <property type="entry name" value="Ribosomal_uL29_sf"/>
</dbReference>
<dbReference type="NCBIfam" id="TIGR00012">
    <property type="entry name" value="L29"/>
    <property type="match status" value="1"/>
</dbReference>
<dbReference type="PANTHER" id="PTHR10916">
    <property type="entry name" value="60S RIBOSOMAL PROTEIN L35/50S RIBOSOMAL PROTEIN L29"/>
    <property type="match status" value="1"/>
</dbReference>
<dbReference type="PANTHER" id="PTHR10916:SF0">
    <property type="entry name" value="LARGE RIBOSOMAL SUBUNIT PROTEIN UL29C"/>
    <property type="match status" value="1"/>
</dbReference>
<dbReference type="Pfam" id="PF00831">
    <property type="entry name" value="Ribosomal_L29"/>
    <property type="match status" value="1"/>
</dbReference>
<dbReference type="SUPFAM" id="SSF46561">
    <property type="entry name" value="Ribosomal protein L29 (L29p)"/>
    <property type="match status" value="1"/>
</dbReference>
<dbReference type="PROSITE" id="PS00579">
    <property type="entry name" value="RIBOSOMAL_L29"/>
    <property type="match status" value="1"/>
</dbReference>
<organism>
    <name type="scientific">Rickettsia bellii (strain OSU 85-389)</name>
    <dbReference type="NCBI Taxonomy" id="391896"/>
    <lineage>
        <taxon>Bacteria</taxon>
        <taxon>Pseudomonadati</taxon>
        <taxon>Pseudomonadota</taxon>
        <taxon>Alphaproteobacteria</taxon>
        <taxon>Rickettsiales</taxon>
        <taxon>Rickettsiaceae</taxon>
        <taxon>Rickettsieae</taxon>
        <taxon>Rickettsia</taxon>
        <taxon>belli group</taxon>
    </lineage>
</organism>
<proteinExistence type="inferred from homology"/>
<protein>
    <recommendedName>
        <fullName evidence="1">Large ribosomal subunit protein uL29</fullName>
    </recommendedName>
    <alternativeName>
        <fullName evidence="2">50S ribosomal protein L29</fullName>
    </alternativeName>
</protein>
<comment type="similarity">
    <text evidence="1">Belongs to the universal ribosomal protein uL29 family.</text>
</comment>
<evidence type="ECO:0000255" key="1">
    <source>
        <dbReference type="HAMAP-Rule" id="MF_00374"/>
    </source>
</evidence>
<evidence type="ECO:0000305" key="2"/>
<gene>
    <name evidence="1" type="primary">rpmC</name>
    <name type="ordered locus">A1I_02075</name>
</gene>
<keyword id="KW-0687">Ribonucleoprotein</keyword>
<keyword id="KW-0689">Ribosomal protein</keyword>